<reference key="1">
    <citation type="journal article" date="2003" name="Proc. Natl. Acad. Sci. U.S.A.">
        <title>Reductive genome evolution in Buchnera aphidicola.</title>
        <authorList>
            <person name="van Ham R.C.H.J."/>
            <person name="Kamerbeek J."/>
            <person name="Palacios C."/>
            <person name="Rausell C."/>
            <person name="Abascal F."/>
            <person name="Bastolla U."/>
            <person name="Fernandez J.M."/>
            <person name="Jimenez L."/>
            <person name="Postigo M."/>
            <person name="Silva F.J."/>
            <person name="Tamames J."/>
            <person name="Viguera E."/>
            <person name="Latorre A."/>
            <person name="Valencia A."/>
            <person name="Moran F."/>
            <person name="Moya A."/>
        </authorList>
    </citation>
    <scope>NUCLEOTIDE SEQUENCE [LARGE SCALE GENOMIC DNA]</scope>
    <source>
        <strain>Bp</strain>
    </source>
</reference>
<proteinExistence type="inferred from homology"/>
<name>FLII_BUCBP</name>
<sequence>MNLRIKKWLEKLDQFEKILVHMPSIMYCGKLIGINGLVLEVSGLKLPIGTICIVEKNNSILDSDMIEAEVIGFRRNLLLLLLLSNVSDLTADSKVTPKILNGSYYNINKLPVCDKLLGRIVDGLGKPLDNFSKIDSKYNVSLTNVSINPLHREPVTHVLDTGIRSINGLLTIGRGQKIGLFASSGLGKSVLLGMMTRYTQADIVILSLIGERGREVKEFIDSVLTETVLSRSIVISAPSESSVLMQTRGAIYAMRIAEYFRDKNFHVLLIMDSLTRYAMAHREISLSIGELPVSKGYPPSVFSKLFSLIERAGNGKINSGSITAFFTVLTEEEERYDPISESARSILDGHIILSREYAESGHYPAINIENSISRVMPNIVDSSHYSFACHFKKIVSLYQRNRDLINVGAYISGTDPDLDMAITLIPKLNKFLQQGMLEKSNFLDSKKSLYSLFN</sequence>
<gene>
    <name type="primary">fliI</name>
    <name type="ordered locus">bbp_071</name>
</gene>
<protein>
    <recommendedName>
        <fullName>Flagellum-specific ATP synthase</fullName>
        <ecNumber>7.1.2.2</ecNumber>
    </recommendedName>
</protein>
<dbReference type="EC" id="7.1.2.2"/>
<dbReference type="EMBL" id="AE016826">
    <property type="protein sequence ID" value="AAO26807.1"/>
    <property type="molecule type" value="Genomic_DNA"/>
</dbReference>
<dbReference type="RefSeq" id="WP_011091208.1">
    <property type="nucleotide sequence ID" value="NC_004545.1"/>
</dbReference>
<dbReference type="SMR" id="Q89AZ7"/>
<dbReference type="STRING" id="224915.bbp_071"/>
<dbReference type="KEGG" id="bab:bbp_071"/>
<dbReference type="eggNOG" id="COG1157">
    <property type="taxonomic scope" value="Bacteria"/>
</dbReference>
<dbReference type="HOGENOM" id="CLU_022398_5_1_6"/>
<dbReference type="OrthoDB" id="9148544at2"/>
<dbReference type="Proteomes" id="UP000000601">
    <property type="component" value="Chromosome"/>
</dbReference>
<dbReference type="GO" id="GO:0005737">
    <property type="term" value="C:cytoplasm"/>
    <property type="evidence" value="ECO:0007669"/>
    <property type="project" value="UniProtKB-SubCell"/>
</dbReference>
<dbReference type="GO" id="GO:0030257">
    <property type="term" value="C:type III protein secretion system complex"/>
    <property type="evidence" value="ECO:0007669"/>
    <property type="project" value="InterPro"/>
</dbReference>
<dbReference type="GO" id="GO:0005524">
    <property type="term" value="F:ATP binding"/>
    <property type="evidence" value="ECO:0007669"/>
    <property type="project" value="UniProtKB-KW"/>
</dbReference>
<dbReference type="GO" id="GO:0016887">
    <property type="term" value="F:ATP hydrolysis activity"/>
    <property type="evidence" value="ECO:0007669"/>
    <property type="project" value="InterPro"/>
</dbReference>
<dbReference type="GO" id="GO:0046933">
    <property type="term" value="F:proton-transporting ATP synthase activity, rotational mechanism"/>
    <property type="evidence" value="ECO:0007669"/>
    <property type="project" value="TreeGrafter"/>
</dbReference>
<dbReference type="GO" id="GO:0044781">
    <property type="term" value="P:bacterial-type flagellum organization"/>
    <property type="evidence" value="ECO:0007669"/>
    <property type="project" value="UniProtKB-KW"/>
</dbReference>
<dbReference type="GO" id="GO:0030254">
    <property type="term" value="P:protein secretion by the type III secretion system"/>
    <property type="evidence" value="ECO:0007669"/>
    <property type="project" value="InterPro"/>
</dbReference>
<dbReference type="CDD" id="cd01136">
    <property type="entry name" value="ATPase_flagellum-secretory_path_III"/>
    <property type="match status" value="1"/>
</dbReference>
<dbReference type="FunFam" id="3.40.50.12240:FF:000002">
    <property type="entry name" value="Flagellum-specific ATP synthase FliI"/>
    <property type="match status" value="1"/>
</dbReference>
<dbReference type="Gene3D" id="3.40.50.12240">
    <property type="match status" value="1"/>
</dbReference>
<dbReference type="InterPro" id="IPR003593">
    <property type="entry name" value="AAA+_ATPase"/>
</dbReference>
<dbReference type="InterPro" id="IPR020003">
    <property type="entry name" value="ATPase_a/bsu_AS"/>
</dbReference>
<dbReference type="InterPro" id="IPR050053">
    <property type="entry name" value="ATPase_alpha/beta_chains"/>
</dbReference>
<dbReference type="InterPro" id="IPR000194">
    <property type="entry name" value="ATPase_F1/V1/A1_a/bsu_nucl-bd"/>
</dbReference>
<dbReference type="InterPro" id="IPR005714">
    <property type="entry name" value="ATPase_T3SS_FliI/YscN"/>
</dbReference>
<dbReference type="InterPro" id="IPR027417">
    <property type="entry name" value="P-loop_NTPase"/>
</dbReference>
<dbReference type="InterPro" id="IPR040627">
    <property type="entry name" value="T3SS_ATPase_C"/>
</dbReference>
<dbReference type="NCBIfam" id="TIGR01026">
    <property type="entry name" value="fliI_yscN"/>
    <property type="match status" value="1"/>
</dbReference>
<dbReference type="PANTHER" id="PTHR15184">
    <property type="entry name" value="ATP SYNTHASE"/>
    <property type="match status" value="1"/>
</dbReference>
<dbReference type="PANTHER" id="PTHR15184:SF81">
    <property type="entry name" value="FLAGELLUM-SPECIFIC ATP SYNTHASE"/>
    <property type="match status" value="1"/>
</dbReference>
<dbReference type="Pfam" id="PF00006">
    <property type="entry name" value="ATP-synt_ab"/>
    <property type="match status" value="1"/>
</dbReference>
<dbReference type="Pfam" id="PF18269">
    <property type="entry name" value="T3SS_ATPase_C"/>
    <property type="match status" value="1"/>
</dbReference>
<dbReference type="SMART" id="SM00382">
    <property type="entry name" value="AAA"/>
    <property type="match status" value="1"/>
</dbReference>
<dbReference type="SUPFAM" id="SSF52540">
    <property type="entry name" value="P-loop containing nucleoside triphosphate hydrolases"/>
    <property type="match status" value="1"/>
</dbReference>
<dbReference type="PROSITE" id="PS00152">
    <property type="entry name" value="ATPASE_ALPHA_BETA"/>
    <property type="match status" value="1"/>
</dbReference>
<keyword id="KW-0066">ATP synthesis</keyword>
<keyword id="KW-0067">ATP-binding</keyword>
<keyword id="KW-1005">Bacterial flagellum biogenesis</keyword>
<keyword id="KW-1006">Bacterial flagellum protein export</keyword>
<keyword id="KW-0963">Cytoplasm</keyword>
<keyword id="KW-0375">Hydrogen ion transport</keyword>
<keyword id="KW-0406">Ion transport</keyword>
<keyword id="KW-0547">Nucleotide-binding</keyword>
<keyword id="KW-0653">Protein transport</keyword>
<keyword id="KW-1185">Reference proteome</keyword>
<keyword id="KW-1278">Translocase</keyword>
<keyword id="KW-0813">Transport</keyword>
<feature type="chain" id="PRO_0000144692" description="Flagellum-specific ATP synthase">
    <location>
        <begin position="1"/>
        <end position="454"/>
    </location>
</feature>
<feature type="binding site" evidence="1">
    <location>
        <begin position="182"/>
        <end position="189"/>
    </location>
    <ligand>
        <name>ATP</name>
        <dbReference type="ChEBI" id="CHEBI:30616"/>
    </ligand>
</feature>
<evidence type="ECO:0000250" key="1"/>
<evidence type="ECO:0000255" key="2">
    <source>
        <dbReference type="PROSITE-ProRule" id="PRU10106"/>
    </source>
</evidence>
<evidence type="ECO:0000305" key="3"/>
<organism>
    <name type="scientific">Buchnera aphidicola subsp. Baizongia pistaciae (strain Bp)</name>
    <dbReference type="NCBI Taxonomy" id="224915"/>
    <lineage>
        <taxon>Bacteria</taxon>
        <taxon>Pseudomonadati</taxon>
        <taxon>Pseudomonadota</taxon>
        <taxon>Gammaproteobacteria</taxon>
        <taxon>Enterobacterales</taxon>
        <taxon>Erwiniaceae</taxon>
        <taxon>Buchnera</taxon>
    </lineage>
</organism>
<accession>Q89AZ7</accession>
<comment type="function">
    <text evidence="1">Probable catalytic subunit of a protein translocase for flagellum-specific export, or a proton translocase involved in local circuits at the flagellum. May be involved in a specialized protein export pathway that proceeds without signal peptide cleavage (By similarity).</text>
</comment>
<comment type="catalytic activity">
    <reaction evidence="2">
        <text>ATP + H2O + 4 H(+)(in) = ADP + phosphate + 5 H(+)(out)</text>
        <dbReference type="Rhea" id="RHEA:57720"/>
        <dbReference type="ChEBI" id="CHEBI:15377"/>
        <dbReference type="ChEBI" id="CHEBI:15378"/>
        <dbReference type="ChEBI" id="CHEBI:30616"/>
        <dbReference type="ChEBI" id="CHEBI:43474"/>
        <dbReference type="ChEBI" id="CHEBI:456216"/>
        <dbReference type="EC" id="7.1.2.2"/>
    </reaction>
</comment>
<comment type="subcellular location">
    <subcellularLocation>
        <location evidence="3">Cytoplasm</location>
    </subcellularLocation>
</comment>
<comment type="similarity">
    <text evidence="3">Belongs to the ATPase alpha/beta chains family.</text>
</comment>